<feature type="chain" id="PRO_0000305017" description="Mediator of RNA polymerase II transcription subunit 27">
    <location>
        <begin position="1"/>
        <end position="295"/>
    </location>
</feature>
<sequence length="295" mass="34021">MNLEPINNALSQLRVLRSSVGQVFETLGTGVRADHGEEGKEQKFLQELQELLNSVNANLKDFESCINDLTPPQTPLTLANSAYLSLETNLERQALYPHLVQSYKWHDKLHEYSTFASTLLQQNSLKRSYYTNTKRRRSLPSSHLATPQMVENLIGSIHYNNMNLKIARPFMTNAILHITIARVLRAAVILKGLLIEWVTVKGYEESLLDGVDEQWTESRHQVFRKVQDHAHSAMLHFFSPTLPELAIRSFITWFRSYVTLFADPCKKCGKHLHNTLPPTWRDLRTLEPFHEECKQ</sequence>
<name>MED27_ANOGA</name>
<accession>Q7QCJ9</accession>
<comment type="function">
    <text evidence="1">Component of the Mediator complex, a coactivator involved in the regulated transcription of nearly all RNA polymerase II-dependent genes. Mediator functions as a bridge to convey information from gene-specific regulatory proteins to the basal RNA polymerase II transcription machinery. Mediator is recruited to promoters by direct interactions with regulatory proteins and serves as a scaffold for the assembly of a functional preinitiation complex with RNA polymerase II and the general transcription factors (By similarity).</text>
</comment>
<comment type="subunit">
    <text evidence="1">Component of the Mediator complex.</text>
</comment>
<comment type="subcellular location">
    <subcellularLocation>
        <location evidence="1">Nucleus</location>
    </subcellularLocation>
</comment>
<comment type="similarity">
    <text evidence="2">Belongs to the Mediator complex subunit 27 family.</text>
</comment>
<dbReference type="EMBL" id="AAAB01008859">
    <property type="protein sequence ID" value="EAA08132.3"/>
    <property type="molecule type" value="Genomic_DNA"/>
</dbReference>
<dbReference type="SMR" id="Q7QCJ9"/>
<dbReference type="FunCoup" id="Q7QCJ9">
    <property type="interactions" value="2122"/>
</dbReference>
<dbReference type="STRING" id="7165.Q7QCJ9"/>
<dbReference type="PaxDb" id="7165-AGAP002664-PA"/>
<dbReference type="EnsemblMetazoa" id="AGAP002664-RA">
    <property type="protein sequence ID" value="AGAP002664-PA"/>
    <property type="gene ID" value="AGAP002664"/>
</dbReference>
<dbReference type="GeneID" id="1273296"/>
<dbReference type="KEGG" id="aga:1273296"/>
<dbReference type="CTD" id="9442"/>
<dbReference type="VEuPathDB" id="VectorBase:AGAMI1_008022"/>
<dbReference type="VEuPathDB" id="VectorBase:AGAP002664"/>
<dbReference type="eggNOG" id="ENOG502QS6H">
    <property type="taxonomic scope" value="Eukaryota"/>
</dbReference>
<dbReference type="HOGENOM" id="CLU_056015_0_0_1"/>
<dbReference type="InParanoid" id="Q7QCJ9"/>
<dbReference type="OMA" id="FHEDCRN"/>
<dbReference type="OrthoDB" id="1868004at2759"/>
<dbReference type="PhylomeDB" id="Q7QCJ9"/>
<dbReference type="Proteomes" id="UP000007062">
    <property type="component" value="Chromosome 2R"/>
</dbReference>
<dbReference type="GO" id="GO:0016592">
    <property type="term" value="C:mediator complex"/>
    <property type="evidence" value="ECO:0000318"/>
    <property type="project" value="GO_Central"/>
</dbReference>
<dbReference type="GO" id="GO:0003713">
    <property type="term" value="F:transcription coactivator activity"/>
    <property type="evidence" value="ECO:0000318"/>
    <property type="project" value="GO_Central"/>
</dbReference>
<dbReference type="GO" id="GO:0006357">
    <property type="term" value="P:regulation of transcription by RNA polymerase II"/>
    <property type="evidence" value="ECO:0000318"/>
    <property type="project" value="GO_Central"/>
</dbReference>
<dbReference type="InterPro" id="IPR021627">
    <property type="entry name" value="Mediator_Med27"/>
</dbReference>
<dbReference type="PANTHER" id="PTHR13130">
    <property type="entry name" value="34 KDA TRANSCRIPTIONAL CO-ACTIVATOR-RELATED"/>
    <property type="match status" value="1"/>
</dbReference>
<dbReference type="PANTHER" id="PTHR13130:SF4">
    <property type="entry name" value="MEDIATOR OF RNA POLYMERASE II TRANSCRIPTION SUBUNIT 27"/>
    <property type="match status" value="1"/>
</dbReference>
<dbReference type="Pfam" id="PF11571">
    <property type="entry name" value="Med27"/>
    <property type="match status" value="1"/>
</dbReference>
<reference key="1">
    <citation type="journal article" date="2002" name="Science">
        <title>The genome sequence of the malaria mosquito Anopheles gambiae.</title>
        <authorList>
            <person name="Holt R.A."/>
            <person name="Subramanian G.M."/>
            <person name="Halpern A."/>
            <person name="Sutton G.G."/>
            <person name="Charlab R."/>
            <person name="Nusskern D.R."/>
            <person name="Wincker P."/>
            <person name="Clark A.G."/>
            <person name="Ribeiro J.M.C."/>
            <person name="Wides R."/>
            <person name="Salzberg S.L."/>
            <person name="Loftus B.J."/>
            <person name="Yandell M.D."/>
            <person name="Majoros W.H."/>
            <person name="Rusch D.B."/>
            <person name="Lai Z."/>
            <person name="Kraft C.L."/>
            <person name="Abril J.F."/>
            <person name="Anthouard V."/>
            <person name="Arensburger P."/>
            <person name="Atkinson P.W."/>
            <person name="Baden H."/>
            <person name="de Berardinis V."/>
            <person name="Baldwin D."/>
            <person name="Benes V."/>
            <person name="Biedler J."/>
            <person name="Blass C."/>
            <person name="Bolanos R."/>
            <person name="Boscus D."/>
            <person name="Barnstead M."/>
            <person name="Cai S."/>
            <person name="Center A."/>
            <person name="Chaturverdi K."/>
            <person name="Christophides G.K."/>
            <person name="Chrystal M.A.M."/>
            <person name="Clamp M."/>
            <person name="Cravchik A."/>
            <person name="Curwen V."/>
            <person name="Dana A."/>
            <person name="Delcher A."/>
            <person name="Dew I."/>
            <person name="Evans C.A."/>
            <person name="Flanigan M."/>
            <person name="Grundschober-Freimoser A."/>
            <person name="Friedli L."/>
            <person name="Gu Z."/>
            <person name="Guan P."/>
            <person name="Guigo R."/>
            <person name="Hillenmeyer M.E."/>
            <person name="Hladun S.L."/>
            <person name="Hogan J.R."/>
            <person name="Hong Y.S."/>
            <person name="Hoover J."/>
            <person name="Jaillon O."/>
            <person name="Ke Z."/>
            <person name="Kodira C.D."/>
            <person name="Kokoza E."/>
            <person name="Koutsos A."/>
            <person name="Letunic I."/>
            <person name="Levitsky A.A."/>
            <person name="Liang Y."/>
            <person name="Lin J.-J."/>
            <person name="Lobo N.F."/>
            <person name="Lopez J.R."/>
            <person name="Malek J.A."/>
            <person name="McIntosh T.C."/>
            <person name="Meister S."/>
            <person name="Miller J.R."/>
            <person name="Mobarry C."/>
            <person name="Mongin E."/>
            <person name="Murphy S.D."/>
            <person name="O'Brochta D.A."/>
            <person name="Pfannkoch C."/>
            <person name="Qi R."/>
            <person name="Regier M.A."/>
            <person name="Remington K."/>
            <person name="Shao H."/>
            <person name="Sharakhova M.V."/>
            <person name="Sitter C.D."/>
            <person name="Shetty J."/>
            <person name="Smith T.J."/>
            <person name="Strong R."/>
            <person name="Sun J."/>
            <person name="Thomasova D."/>
            <person name="Ton L.Q."/>
            <person name="Topalis P."/>
            <person name="Tu Z.J."/>
            <person name="Unger M.F."/>
            <person name="Walenz B."/>
            <person name="Wang A.H."/>
            <person name="Wang J."/>
            <person name="Wang M."/>
            <person name="Wang X."/>
            <person name="Woodford K.J."/>
            <person name="Wortman J.R."/>
            <person name="Wu M."/>
            <person name="Yao A."/>
            <person name="Zdobnov E.M."/>
            <person name="Zhang H."/>
            <person name="Zhao Q."/>
            <person name="Zhao S."/>
            <person name="Zhu S.C."/>
            <person name="Zhimulev I."/>
            <person name="Coluzzi M."/>
            <person name="della Torre A."/>
            <person name="Roth C.W."/>
            <person name="Louis C."/>
            <person name="Kalush F."/>
            <person name="Mural R.J."/>
            <person name="Myers E.W."/>
            <person name="Adams M.D."/>
            <person name="Smith H.O."/>
            <person name="Broder S."/>
            <person name="Gardner M.J."/>
            <person name="Fraser C.M."/>
            <person name="Birney E."/>
            <person name="Bork P."/>
            <person name="Brey P.T."/>
            <person name="Venter J.C."/>
            <person name="Weissenbach J."/>
            <person name="Kafatos F.C."/>
            <person name="Collins F.H."/>
            <person name="Hoffman S.L."/>
        </authorList>
    </citation>
    <scope>NUCLEOTIDE SEQUENCE [LARGE SCALE GENOMIC DNA]</scope>
    <source>
        <strain>PEST</strain>
    </source>
</reference>
<protein>
    <recommendedName>
        <fullName>Mediator of RNA polymerase II transcription subunit 27</fullName>
    </recommendedName>
    <alternativeName>
        <fullName>Mediator complex subunit 27</fullName>
    </alternativeName>
</protein>
<proteinExistence type="inferred from homology"/>
<gene>
    <name type="primary">MED27</name>
    <name type="ORF">AGAP002664</name>
</gene>
<organism>
    <name type="scientific">Anopheles gambiae</name>
    <name type="common">African malaria mosquito</name>
    <dbReference type="NCBI Taxonomy" id="7165"/>
    <lineage>
        <taxon>Eukaryota</taxon>
        <taxon>Metazoa</taxon>
        <taxon>Ecdysozoa</taxon>
        <taxon>Arthropoda</taxon>
        <taxon>Hexapoda</taxon>
        <taxon>Insecta</taxon>
        <taxon>Pterygota</taxon>
        <taxon>Neoptera</taxon>
        <taxon>Endopterygota</taxon>
        <taxon>Diptera</taxon>
        <taxon>Nematocera</taxon>
        <taxon>Culicoidea</taxon>
        <taxon>Culicidae</taxon>
        <taxon>Anophelinae</taxon>
        <taxon>Anopheles</taxon>
    </lineage>
</organism>
<keyword id="KW-0010">Activator</keyword>
<keyword id="KW-0539">Nucleus</keyword>
<keyword id="KW-1185">Reference proteome</keyword>
<keyword id="KW-0804">Transcription</keyword>
<keyword id="KW-0805">Transcription regulation</keyword>
<evidence type="ECO:0000250" key="1"/>
<evidence type="ECO:0000305" key="2"/>